<sequence>MAAWSPAAAVPLLRGTRRLPLLHWAQRMFASQTEAELKVTQILKEKFPRATAIKVTDISGGCGAMYEIKIESEEFKEKRTVQQHQMVNQALKEEIKGMHGLRIFTSVPKH</sequence>
<feature type="chain" id="PRO_0000245500" description="BolA-like protein 3">
    <location>
        <begin position="1"/>
        <end position="110"/>
    </location>
</feature>
<name>BOLA3_BOVIN</name>
<keyword id="KW-0496">Mitochondrion</keyword>
<keyword id="KW-1185">Reference proteome</keyword>
<accession>Q3SZ84</accession>
<protein>
    <recommendedName>
        <fullName>BolA-like protein 3</fullName>
    </recommendedName>
</protein>
<proteinExistence type="inferred from homology"/>
<evidence type="ECO:0000250" key="1">
    <source>
        <dbReference type="UniProtKB" id="P39724"/>
    </source>
</evidence>
<evidence type="ECO:0000250" key="2">
    <source>
        <dbReference type="UniProtKB" id="Q53S33"/>
    </source>
</evidence>
<evidence type="ECO:0000305" key="3"/>
<comment type="function">
    <text evidence="1 2">Acts as a mitochondrial iron-sulfur (Fe-S) cluster assembly factor that facilitates (Fe-S) cluster insertion into a subset of mitochondrial proteins. Probably acts together with NFU1.</text>
</comment>
<comment type="subunit">
    <text evidence="2">Interacts with NFU1.</text>
</comment>
<comment type="subcellular location">
    <subcellularLocation>
        <location evidence="2">Mitochondrion</location>
    </subcellularLocation>
</comment>
<comment type="similarity">
    <text evidence="3">Belongs to the BolA/IbaG family.</text>
</comment>
<gene>
    <name type="primary">BOLA3</name>
</gene>
<organism>
    <name type="scientific">Bos taurus</name>
    <name type="common">Bovine</name>
    <dbReference type="NCBI Taxonomy" id="9913"/>
    <lineage>
        <taxon>Eukaryota</taxon>
        <taxon>Metazoa</taxon>
        <taxon>Chordata</taxon>
        <taxon>Craniata</taxon>
        <taxon>Vertebrata</taxon>
        <taxon>Euteleostomi</taxon>
        <taxon>Mammalia</taxon>
        <taxon>Eutheria</taxon>
        <taxon>Laurasiatheria</taxon>
        <taxon>Artiodactyla</taxon>
        <taxon>Ruminantia</taxon>
        <taxon>Pecora</taxon>
        <taxon>Bovidae</taxon>
        <taxon>Bovinae</taxon>
        <taxon>Bos</taxon>
    </lineage>
</organism>
<dbReference type="EMBL" id="BC103056">
    <property type="protein sequence ID" value="AAI03057.1"/>
    <property type="molecule type" value="mRNA"/>
</dbReference>
<dbReference type="RefSeq" id="NP_001030529.1">
    <property type="nucleotide sequence ID" value="NM_001035452.2"/>
</dbReference>
<dbReference type="SMR" id="Q3SZ84"/>
<dbReference type="FunCoup" id="Q3SZ84">
    <property type="interactions" value="349"/>
</dbReference>
<dbReference type="STRING" id="9913.ENSBTAP00000060712"/>
<dbReference type="PaxDb" id="9913-ENSBTAP00000020215"/>
<dbReference type="Ensembl" id="ENSBTAT00000094061.1">
    <property type="protein sequence ID" value="ENSBTAP00000075079.1"/>
    <property type="gene ID" value="ENSBTAG00000050675.2"/>
</dbReference>
<dbReference type="GeneID" id="614629"/>
<dbReference type="KEGG" id="bta:614629"/>
<dbReference type="CTD" id="388962"/>
<dbReference type="eggNOG" id="KOG3348">
    <property type="taxonomic scope" value="Eukaryota"/>
</dbReference>
<dbReference type="GeneTree" id="ENSGT00390000013048"/>
<dbReference type="HOGENOM" id="CLU_109462_0_2_1"/>
<dbReference type="InParanoid" id="Q3SZ84"/>
<dbReference type="OrthoDB" id="203381at2759"/>
<dbReference type="TreeFam" id="TF332952"/>
<dbReference type="Proteomes" id="UP000009136">
    <property type="component" value="Chromosome 11"/>
</dbReference>
<dbReference type="GO" id="GO:0005759">
    <property type="term" value="C:mitochondrial matrix"/>
    <property type="evidence" value="ECO:0000318"/>
    <property type="project" value="GO_Central"/>
</dbReference>
<dbReference type="GO" id="GO:0005739">
    <property type="term" value="C:mitochondrion"/>
    <property type="evidence" value="ECO:0000250"/>
    <property type="project" value="UniProtKB"/>
</dbReference>
<dbReference type="FunFam" id="3.30.300.90:FF:000003">
    <property type="entry name" value="BolA family member 3"/>
    <property type="match status" value="1"/>
</dbReference>
<dbReference type="Gene3D" id="3.30.300.90">
    <property type="entry name" value="BolA-like"/>
    <property type="match status" value="1"/>
</dbReference>
<dbReference type="InterPro" id="IPR002634">
    <property type="entry name" value="BolA"/>
</dbReference>
<dbReference type="InterPro" id="IPR036065">
    <property type="entry name" value="BolA-like_sf"/>
</dbReference>
<dbReference type="InterPro" id="IPR052275">
    <property type="entry name" value="Mt_Fe-S_assembly_factor"/>
</dbReference>
<dbReference type="PANTHER" id="PTHR46188">
    <property type="entry name" value="BOLA-LIKE PROTEIN 3"/>
    <property type="match status" value="1"/>
</dbReference>
<dbReference type="PANTHER" id="PTHR46188:SF1">
    <property type="entry name" value="BOLA-LIKE PROTEIN 3"/>
    <property type="match status" value="1"/>
</dbReference>
<dbReference type="Pfam" id="PF01722">
    <property type="entry name" value="BolA"/>
    <property type="match status" value="1"/>
</dbReference>
<dbReference type="SUPFAM" id="SSF82657">
    <property type="entry name" value="BolA-like"/>
    <property type="match status" value="1"/>
</dbReference>
<reference key="1">
    <citation type="submission" date="2005-08" db="EMBL/GenBank/DDBJ databases">
        <authorList>
            <consortium name="NIH - Mammalian Gene Collection (MGC) project"/>
        </authorList>
    </citation>
    <scope>NUCLEOTIDE SEQUENCE [LARGE SCALE MRNA]</scope>
    <source>
        <strain>Hereford</strain>
        <tissue>Heart ventricle</tissue>
    </source>
</reference>